<dbReference type="EC" id="6.1.1.4" evidence="1"/>
<dbReference type="EMBL" id="CP000083">
    <property type="protein sequence ID" value="AAZ26868.1"/>
    <property type="molecule type" value="Genomic_DNA"/>
</dbReference>
<dbReference type="RefSeq" id="WP_011042554.1">
    <property type="nucleotide sequence ID" value="NC_003910.7"/>
</dbReference>
<dbReference type="SMR" id="Q484Q5"/>
<dbReference type="STRING" id="167879.CPS_1722"/>
<dbReference type="KEGG" id="cps:CPS_1722"/>
<dbReference type="eggNOG" id="COG0495">
    <property type="taxonomic scope" value="Bacteria"/>
</dbReference>
<dbReference type="HOGENOM" id="CLU_004427_0_0_6"/>
<dbReference type="Proteomes" id="UP000000547">
    <property type="component" value="Chromosome"/>
</dbReference>
<dbReference type="GO" id="GO:0005829">
    <property type="term" value="C:cytosol"/>
    <property type="evidence" value="ECO:0007669"/>
    <property type="project" value="TreeGrafter"/>
</dbReference>
<dbReference type="GO" id="GO:0002161">
    <property type="term" value="F:aminoacyl-tRNA deacylase activity"/>
    <property type="evidence" value="ECO:0007669"/>
    <property type="project" value="InterPro"/>
</dbReference>
<dbReference type="GO" id="GO:0005524">
    <property type="term" value="F:ATP binding"/>
    <property type="evidence" value="ECO:0007669"/>
    <property type="project" value="UniProtKB-UniRule"/>
</dbReference>
<dbReference type="GO" id="GO:0004823">
    <property type="term" value="F:leucine-tRNA ligase activity"/>
    <property type="evidence" value="ECO:0007669"/>
    <property type="project" value="UniProtKB-UniRule"/>
</dbReference>
<dbReference type="GO" id="GO:0006429">
    <property type="term" value="P:leucyl-tRNA aminoacylation"/>
    <property type="evidence" value="ECO:0007669"/>
    <property type="project" value="UniProtKB-UniRule"/>
</dbReference>
<dbReference type="CDD" id="cd07958">
    <property type="entry name" value="Anticodon_Ia_Leu_BEm"/>
    <property type="match status" value="1"/>
</dbReference>
<dbReference type="CDD" id="cd00812">
    <property type="entry name" value="LeuRS_core"/>
    <property type="match status" value="1"/>
</dbReference>
<dbReference type="FunFam" id="1.10.730.10:FF:000003">
    <property type="entry name" value="Leucine--tRNA ligase"/>
    <property type="match status" value="1"/>
</dbReference>
<dbReference type="FunFam" id="2.20.28.290:FF:000001">
    <property type="entry name" value="Leucine--tRNA ligase"/>
    <property type="match status" value="1"/>
</dbReference>
<dbReference type="FunFam" id="3.10.20.590:FF:000001">
    <property type="entry name" value="Leucine--tRNA ligase"/>
    <property type="match status" value="1"/>
</dbReference>
<dbReference type="FunFam" id="3.40.50.620:FF:000003">
    <property type="entry name" value="Leucine--tRNA ligase"/>
    <property type="match status" value="1"/>
</dbReference>
<dbReference type="FunFam" id="3.40.50.620:FF:000124">
    <property type="entry name" value="Leucine--tRNA ligase"/>
    <property type="match status" value="1"/>
</dbReference>
<dbReference type="Gene3D" id="2.20.28.290">
    <property type="match status" value="1"/>
</dbReference>
<dbReference type="Gene3D" id="3.10.20.590">
    <property type="match status" value="1"/>
</dbReference>
<dbReference type="Gene3D" id="3.40.50.620">
    <property type="entry name" value="HUPs"/>
    <property type="match status" value="2"/>
</dbReference>
<dbReference type="Gene3D" id="1.10.730.10">
    <property type="entry name" value="Isoleucyl-tRNA Synthetase, Domain 1"/>
    <property type="match status" value="1"/>
</dbReference>
<dbReference type="HAMAP" id="MF_00049_B">
    <property type="entry name" value="Leu_tRNA_synth_B"/>
    <property type="match status" value="1"/>
</dbReference>
<dbReference type="InterPro" id="IPR001412">
    <property type="entry name" value="aa-tRNA-synth_I_CS"/>
</dbReference>
<dbReference type="InterPro" id="IPR002300">
    <property type="entry name" value="aa-tRNA-synth_Ia"/>
</dbReference>
<dbReference type="InterPro" id="IPR002302">
    <property type="entry name" value="Leu-tRNA-ligase"/>
</dbReference>
<dbReference type="InterPro" id="IPR025709">
    <property type="entry name" value="Leu_tRNA-synth_edit"/>
</dbReference>
<dbReference type="InterPro" id="IPR013155">
    <property type="entry name" value="M/V/L/I-tRNA-synth_anticd-bd"/>
</dbReference>
<dbReference type="InterPro" id="IPR015413">
    <property type="entry name" value="Methionyl/Leucyl_tRNA_Synth"/>
</dbReference>
<dbReference type="InterPro" id="IPR014729">
    <property type="entry name" value="Rossmann-like_a/b/a_fold"/>
</dbReference>
<dbReference type="InterPro" id="IPR009080">
    <property type="entry name" value="tRNAsynth_Ia_anticodon-bd"/>
</dbReference>
<dbReference type="InterPro" id="IPR009008">
    <property type="entry name" value="Val/Leu/Ile-tRNA-synth_edit"/>
</dbReference>
<dbReference type="NCBIfam" id="TIGR00396">
    <property type="entry name" value="leuS_bact"/>
    <property type="match status" value="1"/>
</dbReference>
<dbReference type="PANTHER" id="PTHR43740:SF2">
    <property type="entry name" value="LEUCINE--TRNA LIGASE, MITOCHONDRIAL"/>
    <property type="match status" value="1"/>
</dbReference>
<dbReference type="PANTHER" id="PTHR43740">
    <property type="entry name" value="LEUCYL-TRNA SYNTHETASE"/>
    <property type="match status" value="1"/>
</dbReference>
<dbReference type="Pfam" id="PF08264">
    <property type="entry name" value="Anticodon_1"/>
    <property type="match status" value="1"/>
</dbReference>
<dbReference type="Pfam" id="PF00133">
    <property type="entry name" value="tRNA-synt_1"/>
    <property type="match status" value="2"/>
</dbReference>
<dbReference type="Pfam" id="PF13603">
    <property type="entry name" value="tRNA-synt_1_2"/>
    <property type="match status" value="1"/>
</dbReference>
<dbReference type="Pfam" id="PF09334">
    <property type="entry name" value="tRNA-synt_1g"/>
    <property type="match status" value="1"/>
</dbReference>
<dbReference type="PRINTS" id="PR00985">
    <property type="entry name" value="TRNASYNTHLEU"/>
</dbReference>
<dbReference type="SUPFAM" id="SSF47323">
    <property type="entry name" value="Anticodon-binding domain of a subclass of class I aminoacyl-tRNA synthetases"/>
    <property type="match status" value="1"/>
</dbReference>
<dbReference type="SUPFAM" id="SSF52374">
    <property type="entry name" value="Nucleotidylyl transferase"/>
    <property type="match status" value="1"/>
</dbReference>
<dbReference type="SUPFAM" id="SSF50677">
    <property type="entry name" value="ValRS/IleRS/LeuRS editing domain"/>
    <property type="match status" value="1"/>
</dbReference>
<dbReference type="PROSITE" id="PS00178">
    <property type="entry name" value="AA_TRNA_LIGASE_I"/>
    <property type="match status" value="1"/>
</dbReference>
<accession>Q484Q5</accession>
<reference key="1">
    <citation type="journal article" date="2005" name="Proc. Natl. Acad. Sci. U.S.A.">
        <title>The psychrophilic lifestyle as revealed by the genome sequence of Colwellia psychrerythraea 34H through genomic and proteomic analyses.</title>
        <authorList>
            <person name="Methe B.A."/>
            <person name="Nelson K.E."/>
            <person name="Deming J.W."/>
            <person name="Momen B."/>
            <person name="Melamud E."/>
            <person name="Zhang X."/>
            <person name="Moult J."/>
            <person name="Madupu R."/>
            <person name="Nelson W.C."/>
            <person name="Dodson R.J."/>
            <person name="Brinkac L.M."/>
            <person name="Daugherty S.C."/>
            <person name="Durkin A.S."/>
            <person name="DeBoy R.T."/>
            <person name="Kolonay J.F."/>
            <person name="Sullivan S.A."/>
            <person name="Zhou L."/>
            <person name="Davidsen T.M."/>
            <person name="Wu M."/>
            <person name="Huston A.L."/>
            <person name="Lewis M."/>
            <person name="Weaver B."/>
            <person name="Weidman J.F."/>
            <person name="Khouri H."/>
            <person name="Utterback T.R."/>
            <person name="Feldblyum T.V."/>
            <person name="Fraser C.M."/>
        </authorList>
    </citation>
    <scope>NUCLEOTIDE SEQUENCE [LARGE SCALE GENOMIC DNA]</scope>
    <source>
        <strain>34H / ATCC BAA-681</strain>
    </source>
</reference>
<feature type="chain" id="PRO_1000009332" description="Leucine--tRNA ligase">
    <location>
        <begin position="1"/>
        <end position="863"/>
    </location>
</feature>
<feature type="short sequence motif" description="'HIGH' region">
    <location>
        <begin position="42"/>
        <end position="52"/>
    </location>
</feature>
<feature type="short sequence motif" description="'KMSKS' region">
    <location>
        <begin position="618"/>
        <end position="622"/>
    </location>
</feature>
<feature type="binding site" evidence="1">
    <location>
        <position position="621"/>
    </location>
    <ligand>
        <name>ATP</name>
        <dbReference type="ChEBI" id="CHEBI:30616"/>
    </ligand>
</feature>
<protein>
    <recommendedName>
        <fullName evidence="1">Leucine--tRNA ligase</fullName>
        <ecNumber evidence="1">6.1.1.4</ecNumber>
    </recommendedName>
    <alternativeName>
        <fullName evidence="1">Leucyl-tRNA synthetase</fullName>
        <shortName evidence="1">LeuRS</shortName>
    </alternativeName>
</protein>
<comment type="catalytic activity">
    <reaction evidence="1">
        <text>tRNA(Leu) + L-leucine + ATP = L-leucyl-tRNA(Leu) + AMP + diphosphate</text>
        <dbReference type="Rhea" id="RHEA:11688"/>
        <dbReference type="Rhea" id="RHEA-COMP:9613"/>
        <dbReference type="Rhea" id="RHEA-COMP:9622"/>
        <dbReference type="ChEBI" id="CHEBI:30616"/>
        <dbReference type="ChEBI" id="CHEBI:33019"/>
        <dbReference type="ChEBI" id="CHEBI:57427"/>
        <dbReference type="ChEBI" id="CHEBI:78442"/>
        <dbReference type="ChEBI" id="CHEBI:78494"/>
        <dbReference type="ChEBI" id="CHEBI:456215"/>
        <dbReference type="EC" id="6.1.1.4"/>
    </reaction>
</comment>
<comment type="subcellular location">
    <subcellularLocation>
        <location evidence="1">Cytoplasm</location>
    </subcellularLocation>
</comment>
<comment type="similarity">
    <text evidence="1">Belongs to the class-I aminoacyl-tRNA synthetase family.</text>
</comment>
<evidence type="ECO:0000255" key="1">
    <source>
        <dbReference type="HAMAP-Rule" id="MF_00049"/>
    </source>
</evidence>
<name>SYL_COLP3</name>
<gene>
    <name evidence="1" type="primary">leuS</name>
    <name type="ordered locus">CPS_1722</name>
</gene>
<proteinExistence type="inferred from homology"/>
<organism>
    <name type="scientific">Colwellia psychrerythraea (strain 34H / ATCC BAA-681)</name>
    <name type="common">Vibrio psychroerythus</name>
    <dbReference type="NCBI Taxonomy" id="167879"/>
    <lineage>
        <taxon>Bacteria</taxon>
        <taxon>Pseudomonadati</taxon>
        <taxon>Pseudomonadota</taxon>
        <taxon>Gammaproteobacteria</taxon>
        <taxon>Alteromonadales</taxon>
        <taxon>Colwelliaceae</taxon>
        <taxon>Colwellia</taxon>
    </lineage>
</organism>
<keyword id="KW-0030">Aminoacyl-tRNA synthetase</keyword>
<keyword id="KW-0067">ATP-binding</keyword>
<keyword id="KW-0963">Cytoplasm</keyword>
<keyword id="KW-0436">Ligase</keyword>
<keyword id="KW-0547">Nucleotide-binding</keyword>
<keyword id="KW-0648">Protein biosynthesis</keyword>
<sequence>MEAIYNPQAIEATVQKFWTDNNTFQAIENPDKEKFYCLAMFPYPSGRLHMGHVRNYSLGDVISRYQRMQGKNVMQPMGWDAFGLPAENAAIKNKTAPGKWTYENIDYMRNQLQSLGFGYDWGRELATCKPDYYRWEQWFFTQLFEKGLVYKKNATVNWDPVDQTVLANEQVIDGRGWRSGALVERKQIPQWFIKITDYAEELLDDLDQLTEWPEQVKTMQRNWIGRSQGVEMTFAVADSTESFDIYTTRPDTLMGVTYVALAAQHPLAVAAAVDNADLAAFIDECKNSKTTEADMAAMEKKGVDTGLKAIHPLTGKLVPVWAANFVLMDYGSGAVMSVPGHDQRDYEFALKYGLAIEQVIAGQEADDINKAAITEKSTLINSGEFDGLDFEEAFKAISDKLISENKGKTTTNYRLRDWGVSRQRYWGTPIPMINLANGESVPVPTNELPVVLPEDVVMNGTTSPIKADPEWAKTLYNGEEALRETDTFDTFMESSWYYARYCSPNDDTQMIDPAKANYWLPVDQYIGGIEHAILHLLYSRFFHKLLRDVGLVKCDEPFKKLLCQGMVLAETYYREADNGAQEWIAPTDVEVERDEKGQITSSISKIDGQPVLSAGMSKMSKSKNNGIDPQEVIEKYGADTVRLFIMFTSPPEQTLEWSDAGVEGAHRFVKRVYKLAHEFVESTNNSAVVDIAELTLNADHKKLRRELHKTIAKVTDDIGRRNTFNTAIAAIMELMNHLGKAKVNSDEDKAVMQEAVRAVVLMLTPITPHLCHHLWQLVGGSDENVEDASWPVVDNSALVEDEKLIIVQVNGKVRAKITVAADASKEDVEALGLNDESVLKFTDGNTIRKVIYIPGKLLNIVAN</sequence>